<reference key="1">
    <citation type="submission" date="2019-04" db="EMBL/GenBank/DDBJ databases">
        <authorList>
            <person name="Gilchrist C.L.M."/>
            <person name="Chooi Y.H."/>
        </authorList>
    </citation>
    <scope>NUCLEOTIDE SEQUENCE [LARGE SCALE GENOMIC DNA]</scope>
    <source>
        <strain>FRR 3425 / CBS 142004 / DTO 360-G7</strain>
    </source>
</reference>
<reference key="2">
    <citation type="journal article" date="2021" name="Org. Biomol. Chem.">
        <title>Hancockiamides: phenylpropanoid piperazines from Aspergillus hancockii are biosynthesised by a versatile dual single-module NRPS pathway.</title>
        <authorList>
            <person name="Li H."/>
            <person name="Lacey A.E."/>
            <person name="Shu S."/>
            <person name="Kalaitzis J.A."/>
            <person name="Vuong D."/>
            <person name="Crombie A."/>
            <person name="Hu J."/>
            <person name="Gilchrist C.L.M."/>
            <person name="Lacey E."/>
            <person name="Piggott A.M."/>
            <person name="Chooi Y.H."/>
        </authorList>
    </citation>
    <scope>FUNCTION</scope>
    <scope>PATHWAY</scope>
    <scope>BIOTECHNOLOGY</scope>
</reference>
<protein>
    <recommendedName>
        <fullName evidence="3">Dioxygenase hkm4</fullName>
        <ecNumber evidence="5">1.14.11.-</ecNumber>
    </recommendedName>
    <alternativeName>
        <fullName evidence="3">Hancockiamides biosynthesis cluster protein 4</fullName>
    </alternativeName>
</protein>
<organism>
    <name type="scientific">Aspergillus hancockii</name>
    <dbReference type="NCBI Taxonomy" id="1873369"/>
    <lineage>
        <taxon>Eukaryota</taxon>
        <taxon>Fungi</taxon>
        <taxon>Dikarya</taxon>
        <taxon>Ascomycota</taxon>
        <taxon>Pezizomycotina</taxon>
        <taxon>Eurotiomycetes</taxon>
        <taxon>Eurotiomycetidae</taxon>
        <taxon>Eurotiales</taxon>
        <taxon>Aspergillaceae</taxon>
        <taxon>Aspergillus</taxon>
        <taxon>Aspergillus subgen. Circumdati</taxon>
    </lineage>
</organism>
<comment type="function">
    <text evidence="2 5">Dioxygenase; part of the gene cluster that mediates the biosynthesis of hancockiamides, an unusual new family of N-cinnamoylated piperazines (PubMed:33242032). The NRPS hkm10 and the NmrA-like reductase hkm9 are proposed to convert two molecules of L-Phe to the intermediary piperazine called xenocockiamide A (Probable). Xenocockiamide A is then converted to hancockiamide D via a series of hydroxylations and O-methylations (Probable). The tyrosinase hkm6 may catalyze an aromatic hydroxylation, then the 2-oxoglutarate-dependent Fe(II) dioxygenase hkm4 and the FAD-dependent phenol hydroxylase hkm7 may catalyze consecutive hydroxylations to install 2 more hydroxy groups, and the methyltransferase hkm8 probably catalyzes two methylations using 2 molecules of S-adenosyl-L-methionine (SAM) (Probable). The NRPS hkm11 activates and transfers trans-cinnamate supplied by the PAL hkm12 to hancockiamide D and produces hancockiamide A (PubMed:33242032). NRPS Hkm11 has the flexibility to tolerate the bulky hancockiamide G as a substrate and the absence of the acetyl-transferase hkm3 opens up the opportunity for hkm11 to introduce a second N-cinnamoyl moiety (PubMed:33242032). The cytochrome P450 monooxygenase hkm5 catalyzes the methylenedioxy bridge formation, converting hancockiamide A into hancockiamide G (PubMed:33242032). Hkm5 can also convert hancockiamide B into hancockiamide C, and hancockiamide D into hancockiamide H (PubMed:33242032). The N-acetyltransferase hkm3 finally transfers an acetyl group to 1-N of piperazine, converting hancockiamide A into hancockiamide B and hancockiamide G into hancockiamide C (PubMed:33242032).</text>
</comment>
<comment type="cofactor">
    <cofactor evidence="1">
        <name>Fe cation</name>
        <dbReference type="ChEBI" id="CHEBI:24875"/>
    </cofactor>
</comment>
<comment type="pathway">
    <text evidence="5">Secondary metabolite biosynthesis.</text>
</comment>
<comment type="biotechnology">
    <text evidence="2">Hancockiamide D displays potent cytotoxic activity against murine myeloma NS-1 cells, suggesting a potential antitumour application (PubMed:33242032). More interestingly, hancockiamide C, the likely end metabolite of the hkm pathway, shows potent Arabidopsis thaliana seed anti-germination activity, but is inactive against the monocot Eragrostis tef seed, suggesting that it could be a herbicidal lead targeting monocots (PubMed:33242032). The herbicidal activity of hancockiamide C could be due to its phenylpropanoid-like structural features, which may act on the plant lignan pathways, and hence warrants further investigations (PubMed:33242032).</text>
</comment>
<comment type="similarity">
    <text evidence="4">Belongs to the PhyH family.</text>
</comment>
<accession>P0DUL2</accession>
<name>HKM4_ASPHA</name>
<evidence type="ECO:0000250" key="1">
    <source>
        <dbReference type="UniProtKB" id="G8GV69"/>
    </source>
</evidence>
<evidence type="ECO:0000269" key="2">
    <source>
    </source>
</evidence>
<evidence type="ECO:0000303" key="3">
    <source>
    </source>
</evidence>
<evidence type="ECO:0000305" key="4"/>
<evidence type="ECO:0000305" key="5">
    <source>
    </source>
</evidence>
<dbReference type="EC" id="1.14.11.-" evidence="5"/>
<dbReference type="EMBL" id="MBFL02000005">
    <property type="protein sequence ID" value="KAF7597146.1"/>
    <property type="molecule type" value="Genomic_DNA"/>
</dbReference>
<dbReference type="SMR" id="P0DUL2"/>
<dbReference type="OrthoDB" id="445007at2759"/>
<dbReference type="GO" id="GO:0051213">
    <property type="term" value="F:dioxygenase activity"/>
    <property type="evidence" value="ECO:0007669"/>
    <property type="project" value="UniProtKB-KW"/>
</dbReference>
<dbReference type="GO" id="GO:0046872">
    <property type="term" value="F:metal ion binding"/>
    <property type="evidence" value="ECO:0007669"/>
    <property type="project" value="UniProtKB-KW"/>
</dbReference>
<dbReference type="GO" id="GO:0009058">
    <property type="term" value="P:biosynthetic process"/>
    <property type="evidence" value="ECO:0007669"/>
    <property type="project" value="UniProtKB-ARBA"/>
</dbReference>
<dbReference type="Gene3D" id="2.60.120.620">
    <property type="entry name" value="q2cbj1_9rhob like domain"/>
    <property type="match status" value="1"/>
</dbReference>
<dbReference type="InterPro" id="IPR008775">
    <property type="entry name" value="Phytyl_CoA_dOase-like"/>
</dbReference>
<dbReference type="PANTHER" id="PTHR20883:SF19">
    <property type="entry name" value="MULTIFUNCTIONAL DIOXYGENASE AUSE"/>
    <property type="match status" value="1"/>
</dbReference>
<dbReference type="PANTHER" id="PTHR20883">
    <property type="entry name" value="PHYTANOYL-COA DIOXYGENASE DOMAIN CONTAINING 1"/>
    <property type="match status" value="1"/>
</dbReference>
<dbReference type="Pfam" id="PF05721">
    <property type="entry name" value="PhyH"/>
    <property type="match status" value="1"/>
</dbReference>
<dbReference type="SUPFAM" id="SSF51197">
    <property type="entry name" value="Clavaminate synthase-like"/>
    <property type="match status" value="1"/>
</dbReference>
<sequence length="305" mass="33741">MSIPSGTEPQIKRFSVTADPDTIFQAYQEDGVVIIQGFLSPEQLDKFNREVNPRLAHQRQGYQPSLKARLMEGSLSALLPPQQKRVHNLAGFSKVFRHDILNHGLMHELCRRAFAATGDYWLSSGAVIENGPGTPEQGWHRDQPSYPVIQAGPGTAEGMVNFFTALTDFTAEAGATQFMHGSHKVVGIPDGDPNHPMLIAEMKAGDSVLLSGKLVHRGGLNNTSDFFRRALSLAISPCVLTPYESSIHLSRPLVESMTPLAQRMIAWRSASIPPPYQIGMWTLNMNEVGEEMGLKYNQPYDEDEE</sequence>
<keyword id="KW-0223">Dioxygenase</keyword>
<keyword id="KW-0408">Iron</keyword>
<keyword id="KW-0479">Metal-binding</keyword>
<keyword id="KW-0560">Oxidoreductase</keyword>
<feature type="chain" id="PRO_0000452931" description="Dioxygenase hkm4">
    <location>
        <begin position="1"/>
        <end position="305"/>
    </location>
</feature>
<feature type="binding site" evidence="1">
    <location>
        <position position="140"/>
    </location>
    <ligand>
        <name>Fe cation</name>
        <dbReference type="ChEBI" id="CHEBI:24875"/>
    </ligand>
</feature>
<feature type="binding site" evidence="1">
    <location>
        <position position="142"/>
    </location>
    <ligand>
        <name>Fe cation</name>
        <dbReference type="ChEBI" id="CHEBI:24875"/>
    </ligand>
</feature>
<feature type="binding site" evidence="1">
    <location>
        <position position="216"/>
    </location>
    <ligand>
        <name>Fe cation</name>
        <dbReference type="ChEBI" id="CHEBI:24875"/>
    </ligand>
</feature>
<proteinExistence type="evidence at protein level"/>